<protein>
    <recommendedName>
        <fullName evidence="1">Large ribosomal subunit protein bL12c</fullName>
    </recommendedName>
    <alternativeName>
        <fullName evidence="2">50S ribosomal protein L12, chloroplastic</fullName>
    </alternativeName>
</protein>
<dbReference type="EMBL" id="AF022186">
    <property type="protein sequence ID" value="AAF12976.1"/>
    <property type="molecule type" value="Genomic_DNA"/>
</dbReference>
<dbReference type="RefSeq" id="NP_045118.1">
    <property type="nucleotide sequence ID" value="NC_001840.1"/>
</dbReference>
<dbReference type="SMR" id="Q9TLZ9"/>
<dbReference type="GeneID" id="800219"/>
<dbReference type="GO" id="GO:0009507">
    <property type="term" value="C:chloroplast"/>
    <property type="evidence" value="ECO:0007669"/>
    <property type="project" value="UniProtKB-SubCell"/>
</dbReference>
<dbReference type="GO" id="GO:0022625">
    <property type="term" value="C:cytosolic large ribosomal subunit"/>
    <property type="evidence" value="ECO:0007669"/>
    <property type="project" value="TreeGrafter"/>
</dbReference>
<dbReference type="GO" id="GO:0003729">
    <property type="term" value="F:mRNA binding"/>
    <property type="evidence" value="ECO:0007669"/>
    <property type="project" value="TreeGrafter"/>
</dbReference>
<dbReference type="GO" id="GO:0003735">
    <property type="term" value="F:structural constituent of ribosome"/>
    <property type="evidence" value="ECO:0007669"/>
    <property type="project" value="InterPro"/>
</dbReference>
<dbReference type="GO" id="GO:0006412">
    <property type="term" value="P:translation"/>
    <property type="evidence" value="ECO:0007669"/>
    <property type="project" value="UniProtKB-UniRule"/>
</dbReference>
<dbReference type="CDD" id="cd00387">
    <property type="entry name" value="Ribosomal_L7_L12"/>
    <property type="match status" value="1"/>
</dbReference>
<dbReference type="FunFam" id="3.30.1390.10:FF:000001">
    <property type="entry name" value="50S ribosomal protein L7/L12"/>
    <property type="match status" value="1"/>
</dbReference>
<dbReference type="Gene3D" id="3.30.1390.10">
    <property type="match status" value="1"/>
</dbReference>
<dbReference type="Gene3D" id="1.20.5.710">
    <property type="entry name" value="Single helix bin"/>
    <property type="match status" value="1"/>
</dbReference>
<dbReference type="HAMAP" id="MF_00368">
    <property type="entry name" value="Ribosomal_bL12"/>
    <property type="match status" value="1"/>
</dbReference>
<dbReference type="InterPro" id="IPR000206">
    <property type="entry name" value="Ribosomal_bL12"/>
</dbReference>
<dbReference type="InterPro" id="IPR013823">
    <property type="entry name" value="Ribosomal_bL12_C"/>
</dbReference>
<dbReference type="InterPro" id="IPR014719">
    <property type="entry name" value="Ribosomal_bL12_C/ClpS-like"/>
</dbReference>
<dbReference type="InterPro" id="IPR008932">
    <property type="entry name" value="Ribosomal_bL12_oligo"/>
</dbReference>
<dbReference type="InterPro" id="IPR036235">
    <property type="entry name" value="Ribosomal_bL12_oligo_N_sf"/>
</dbReference>
<dbReference type="NCBIfam" id="TIGR00855">
    <property type="entry name" value="L12"/>
    <property type="match status" value="1"/>
</dbReference>
<dbReference type="PANTHER" id="PTHR45987">
    <property type="entry name" value="39S RIBOSOMAL PROTEIN L12"/>
    <property type="match status" value="1"/>
</dbReference>
<dbReference type="PANTHER" id="PTHR45987:SF4">
    <property type="entry name" value="LARGE RIBOSOMAL SUBUNIT PROTEIN BL12M"/>
    <property type="match status" value="1"/>
</dbReference>
<dbReference type="Pfam" id="PF00542">
    <property type="entry name" value="Ribosomal_L12"/>
    <property type="match status" value="1"/>
</dbReference>
<dbReference type="Pfam" id="PF16320">
    <property type="entry name" value="Ribosomal_L12_N"/>
    <property type="match status" value="1"/>
</dbReference>
<dbReference type="SUPFAM" id="SSF54736">
    <property type="entry name" value="ClpS-like"/>
    <property type="match status" value="1"/>
</dbReference>
<dbReference type="SUPFAM" id="SSF48300">
    <property type="entry name" value="Ribosomal protein L7/12, oligomerisation (N-terminal) domain"/>
    <property type="match status" value="1"/>
</dbReference>
<feature type="chain" id="PRO_0000157615" description="Large ribosomal subunit protein bL12c">
    <location>
        <begin position="1"/>
        <end position="130"/>
    </location>
</feature>
<gene>
    <name evidence="1" type="primary">rpl12</name>
</gene>
<accession>Q9TLZ9</accession>
<reference key="1">
    <citation type="journal article" date="2000" name="J. Mol. Evol.">
        <title>The structure and gene repertoire of an ancient red algal plastid genome.</title>
        <authorList>
            <person name="Gloeckner G."/>
            <person name="Rosenthal A."/>
            <person name="Valentin K.-U."/>
        </authorList>
    </citation>
    <scope>NUCLEOTIDE SEQUENCE [LARGE SCALE GENOMIC DNA]</scope>
    <source>
        <strain>RK-1</strain>
    </source>
</reference>
<geneLocation type="chloroplast"/>
<evidence type="ECO:0000255" key="1">
    <source>
        <dbReference type="HAMAP-Rule" id="MF_00368"/>
    </source>
</evidence>
<evidence type="ECO:0000305" key="2"/>
<name>RK12_CYACA</name>
<keyword id="KW-0150">Chloroplast</keyword>
<keyword id="KW-0934">Plastid</keyword>
<keyword id="KW-0687">Ribonucleoprotein</keyword>
<keyword id="KW-0689">Ribosomal protein</keyword>
<sequence length="130" mass="14349">MDKIDEIVEKIKLLSLLEASELVKRIEDTFQVNVSNIQPVTGLSSNLTTTQQTPESAEVKEKWDVILENVPADKKIAILKVVRSITGLGLKEAKEFVESVPKIIKQSISQADAEHIKQQIEDAGASVVLK</sequence>
<proteinExistence type="inferred from homology"/>
<organism>
    <name type="scientific">Cyanidium caldarium</name>
    <name type="common">Red alga</name>
    <dbReference type="NCBI Taxonomy" id="2771"/>
    <lineage>
        <taxon>Eukaryota</taxon>
        <taxon>Rhodophyta</taxon>
        <taxon>Bangiophyceae</taxon>
        <taxon>Cyanidiales</taxon>
        <taxon>Cyanidiaceae</taxon>
        <taxon>Cyanidium</taxon>
    </lineage>
</organism>
<comment type="function">
    <text evidence="1">Forms part of the ribosomal stalk which helps the ribosome interact with GTP-bound translation factors. Is thus essential for accurate translation.</text>
</comment>
<comment type="subunit">
    <text evidence="1">Homodimer. Part of the ribosomal stalk of the 50S ribosomal subunit. Forms a multimeric L10(L12)X complex, where L10 forms an elongated spine to which 2 to 4 L12 dimers bind in a sequential fashion. Binds GTP-bound translation factors.</text>
</comment>
<comment type="subcellular location">
    <subcellularLocation>
        <location>Plastid</location>
        <location>Chloroplast</location>
    </subcellularLocation>
</comment>
<comment type="similarity">
    <text evidence="1">Belongs to the bacterial ribosomal protein bL12 family.</text>
</comment>